<evidence type="ECO:0000250" key="1"/>
<evidence type="ECO:0000255" key="2">
    <source>
        <dbReference type="PROSITE-ProRule" id="PRU01234"/>
    </source>
</evidence>
<evidence type="ECO:0000305" key="3"/>
<reference key="1">
    <citation type="journal article" date="2009" name="Nature">
        <title>Evolution of pathogenicity and sexual reproduction in eight Candida genomes.</title>
        <authorList>
            <person name="Butler G."/>
            <person name="Rasmussen M.D."/>
            <person name="Lin M.F."/>
            <person name="Santos M.A.S."/>
            <person name="Sakthikumar S."/>
            <person name="Munro C.A."/>
            <person name="Rheinbay E."/>
            <person name="Grabherr M."/>
            <person name="Forche A."/>
            <person name="Reedy J.L."/>
            <person name="Agrafioti I."/>
            <person name="Arnaud M.B."/>
            <person name="Bates S."/>
            <person name="Brown A.J.P."/>
            <person name="Brunke S."/>
            <person name="Costanzo M.C."/>
            <person name="Fitzpatrick D.A."/>
            <person name="de Groot P.W.J."/>
            <person name="Harris D."/>
            <person name="Hoyer L.L."/>
            <person name="Hube B."/>
            <person name="Klis F.M."/>
            <person name="Kodira C."/>
            <person name="Lennard N."/>
            <person name="Logue M.E."/>
            <person name="Martin R."/>
            <person name="Neiman A.M."/>
            <person name="Nikolaou E."/>
            <person name="Quail M.A."/>
            <person name="Quinn J."/>
            <person name="Santos M.C."/>
            <person name="Schmitzberger F.F."/>
            <person name="Sherlock G."/>
            <person name="Shah P."/>
            <person name="Silverstein K.A.T."/>
            <person name="Skrzypek M.S."/>
            <person name="Soll D."/>
            <person name="Staggs R."/>
            <person name="Stansfield I."/>
            <person name="Stumpf M.P.H."/>
            <person name="Sudbery P.E."/>
            <person name="Srikantha T."/>
            <person name="Zeng Q."/>
            <person name="Berman J."/>
            <person name="Berriman M."/>
            <person name="Heitman J."/>
            <person name="Gow N.A.R."/>
            <person name="Lorenz M.C."/>
            <person name="Birren B.W."/>
            <person name="Kellis M."/>
            <person name="Cuomo C.A."/>
        </authorList>
    </citation>
    <scope>NUCLEOTIDE SEQUENCE [LARGE SCALE GENOMIC DNA]</scope>
    <source>
        <strain>ATCC 6260 / CBS 566 / DSM 6381 / JCM 1539 / NBRC 10279 / NRRL Y-324</strain>
    </source>
</reference>
<organism>
    <name type="scientific">Meyerozyma guilliermondii (strain ATCC 6260 / CBS 566 / DSM 6381 / JCM 1539 / NBRC 10279 / NRRL Y-324)</name>
    <name type="common">Yeast</name>
    <name type="synonym">Candida guilliermondii</name>
    <dbReference type="NCBI Taxonomy" id="294746"/>
    <lineage>
        <taxon>Eukaryota</taxon>
        <taxon>Fungi</taxon>
        <taxon>Dikarya</taxon>
        <taxon>Ascomycota</taxon>
        <taxon>Saccharomycotina</taxon>
        <taxon>Pichiomycetes</taxon>
        <taxon>Debaryomycetaceae</taxon>
        <taxon>Meyerozyma</taxon>
    </lineage>
</organism>
<comment type="function">
    <text evidence="1">May be involved in a process influencing telomere capping.</text>
</comment>
<comment type="subcellular location">
    <subcellularLocation>
        <location evidence="1">Cytoplasm</location>
    </subcellularLocation>
</comment>
<comment type="similarity">
    <text evidence="3">Belongs to the RTC5 family.</text>
</comment>
<proteinExistence type="inferred from homology"/>
<protein>
    <recommendedName>
        <fullName>Restriction of telomere capping protein 5</fullName>
    </recommendedName>
</protein>
<accession>A5DMB8</accession>
<gene>
    <name type="primary">RTC5</name>
    <name type="ORF">PGUG_04419</name>
</gene>
<name>RTC5_PICGU</name>
<sequence length="575" mass="64103">MGQSSSAESFSHSYSPQQVHTLLSYACQRLITPVEAQTLRKKLNSTTVNEKAQLSRADLAQLLLLNDPPSSVVYKCLQKLGKFPFFGEENDSTITADELIVASMLISGRFKKLKLNTDYDKLIFRALATSKLDAVTEKSEQLPVSVKFGRGIENPEHLQMASRFVDWSSMSGFESVDTDGYFISRSEMVQLLALFLVIYSIPKRKRISMQTELSQKLDNDWRSFEAAGEQLTTFIRSSEKISYQDFSSALALLGPLVHYGFEFLVDVMLSDTTEHSDTTETKKGPDLEVTKSHLINSSTIALLAATFAGLGGKQAGISLTRQNLVKLYLGSESGFSIRSLESKVFKWHAPTILLVSGERLRTTIKRYETFDSEYPRFFRSSESPLKPWQQPNDKITYAVLVHEPWKVSNKKNFGDTNTTIIALEPRLDVFKGIASESIYFNTLGMGLGFGNSQPINKNTLKRYAPGSVSLTIEANLEFAVFRHISSQAGSGITSFATGVQPDISGQDYEDRFLITDLEVWGVGSSKELEEQKKQWDWEKKQAEARQSVNLRSMGEDRALLEMVGLVGNHGSGGSV</sequence>
<dbReference type="EMBL" id="CH408159">
    <property type="protein sequence ID" value="EDK40321.2"/>
    <property type="molecule type" value="Genomic_DNA"/>
</dbReference>
<dbReference type="RefSeq" id="XP_001483690.1">
    <property type="nucleotide sequence ID" value="XM_001483640.1"/>
</dbReference>
<dbReference type="SMR" id="A5DMB8"/>
<dbReference type="FunCoup" id="A5DMB8">
    <property type="interactions" value="13"/>
</dbReference>
<dbReference type="STRING" id="294746.A5DMB8"/>
<dbReference type="GeneID" id="5125468"/>
<dbReference type="KEGG" id="pgu:PGUG_04419"/>
<dbReference type="VEuPathDB" id="FungiDB:PGUG_04419"/>
<dbReference type="eggNOG" id="ENOG502QV3R">
    <property type="taxonomic scope" value="Eukaryota"/>
</dbReference>
<dbReference type="HOGENOM" id="CLU_011918_1_0_1"/>
<dbReference type="InParanoid" id="A5DMB8"/>
<dbReference type="OrthoDB" id="289228at2759"/>
<dbReference type="Proteomes" id="UP000001997">
    <property type="component" value="Unassembled WGS sequence"/>
</dbReference>
<dbReference type="GO" id="GO:0000329">
    <property type="term" value="C:fungal-type vacuole membrane"/>
    <property type="evidence" value="ECO:0007669"/>
    <property type="project" value="EnsemblFungi"/>
</dbReference>
<dbReference type="GO" id="GO:0032984">
    <property type="term" value="P:protein-containing complex disassembly"/>
    <property type="evidence" value="ECO:0007669"/>
    <property type="project" value="EnsemblFungi"/>
</dbReference>
<dbReference type="InterPro" id="IPR006571">
    <property type="entry name" value="TLDc_dom"/>
</dbReference>
<dbReference type="Pfam" id="PF07534">
    <property type="entry name" value="TLD"/>
    <property type="match status" value="1"/>
</dbReference>
<dbReference type="SMART" id="SM00584">
    <property type="entry name" value="TLDc"/>
    <property type="match status" value="1"/>
</dbReference>
<dbReference type="PROSITE" id="PS51886">
    <property type="entry name" value="TLDC"/>
    <property type="match status" value="1"/>
</dbReference>
<keyword id="KW-0963">Cytoplasm</keyword>
<keyword id="KW-1185">Reference proteome</keyword>
<feature type="chain" id="PRO_0000408839" description="Restriction of telomere capping protein 5">
    <location>
        <begin position="1"/>
        <end position="575"/>
    </location>
</feature>
<feature type="domain" description="TLDc" evidence="2">
    <location>
        <begin position="293"/>
        <end position="523"/>
    </location>
</feature>